<accession>A5E1P1</accession>
<reference key="1">
    <citation type="journal article" date="2009" name="Nature">
        <title>Evolution of pathogenicity and sexual reproduction in eight Candida genomes.</title>
        <authorList>
            <person name="Butler G."/>
            <person name="Rasmussen M.D."/>
            <person name="Lin M.F."/>
            <person name="Santos M.A.S."/>
            <person name="Sakthikumar S."/>
            <person name="Munro C.A."/>
            <person name="Rheinbay E."/>
            <person name="Grabherr M."/>
            <person name="Forche A."/>
            <person name="Reedy J.L."/>
            <person name="Agrafioti I."/>
            <person name="Arnaud M.B."/>
            <person name="Bates S."/>
            <person name="Brown A.J.P."/>
            <person name="Brunke S."/>
            <person name="Costanzo M.C."/>
            <person name="Fitzpatrick D.A."/>
            <person name="de Groot P.W.J."/>
            <person name="Harris D."/>
            <person name="Hoyer L.L."/>
            <person name="Hube B."/>
            <person name="Klis F.M."/>
            <person name="Kodira C."/>
            <person name="Lennard N."/>
            <person name="Logue M.E."/>
            <person name="Martin R."/>
            <person name="Neiman A.M."/>
            <person name="Nikolaou E."/>
            <person name="Quail M.A."/>
            <person name="Quinn J."/>
            <person name="Santos M.C."/>
            <person name="Schmitzberger F.F."/>
            <person name="Sherlock G."/>
            <person name="Shah P."/>
            <person name="Silverstein K.A.T."/>
            <person name="Skrzypek M.S."/>
            <person name="Soll D."/>
            <person name="Staggs R."/>
            <person name="Stansfield I."/>
            <person name="Stumpf M.P.H."/>
            <person name="Sudbery P.E."/>
            <person name="Srikantha T."/>
            <person name="Zeng Q."/>
            <person name="Berman J."/>
            <person name="Berriman M."/>
            <person name="Heitman J."/>
            <person name="Gow N.A.R."/>
            <person name="Lorenz M.C."/>
            <person name="Birren B.W."/>
            <person name="Kellis M."/>
            <person name="Cuomo C.A."/>
        </authorList>
    </citation>
    <scope>NUCLEOTIDE SEQUENCE [LARGE SCALE GENOMIC DNA]</scope>
    <source>
        <strain>ATCC 11503 / BCRC 21390 / CBS 2605 / JCM 1781 / NBRC 1676 / NRRL YB-4239</strain>
    </source>
</reference>
<organism>
    <name type="scientific">Lodderomyces elongisporus (strain ATCC 11503 / CBS 2605 / JCM 1781 / NBRC 1676 / NRRL YB-4239)</name>
    <name type="common">Yeast</name>
    <name type="synonym">Saccharomyces elongisporus</name>
    <dbReference type="NCBI Taxonomy" id="379508"/>
    <lineage>
        <taxon>Eukaryota</taxon>
        <taxon>Fungi</taxon>
        <taxon>Dikarya</taxon>
        <taxon>Ascomycota</taxon>
        <taxon>Saccharomycotina</taxon>
        <taxon>Pichiomycetes</taxon>
        <taxon>Debaryomycetaceae</taxon>
        <taxon>Candida/Lodderomyces clade</taxon>
        <taxon>Lodderomyces</taxon>
    </lineage>
</organism>
<keyword id="KW-0325">Glycoprotein</keyword>
<keyword id="KW-0333">Golgi apparatus</keyword>
<keyword id="KW-0472">Membrane</keyword>
<keyword id="KW-0653">Protein transport</keyword>
<keyword id="KW-0675">Receptor</keyword>
<keyword id="KW-1185">Reference proteome</keyword>
<keyword id="KW-0677">Repeat</keyword>
<keyword id="KW-0732">Signal</keyword>
<keyword id="KW-0812">Transmembrane</keyword>
<keyword id="KW-1133">Transmembrane helix</keyword>
<keyword id="KW-0813">Transport</keyword>
<name>VPS10_LODEL</name>
<protein>
    <recommendedName>
        <fullName>Vacuolar protein sorting/targeting protein 10</fullName>
    </recommendedName>
    <alternativeName>
        <fullName>Carboxypeptidase Y receptor</fullName>
        <shortName>CPY receptor</shortName>
    </alternativeName>
    <alternativeName>
        <fullName>Sortilin VPS10</fullName>
    </alternativeName>
    <alternativeName>
        <fullName>Vacuolar carboxypeptidase sorting receptor VPS10</fullName>
    </alternativeName>
</protein>
<feature type="signal peptide" evidence="2">
    <location>
        <begin position="1"/>
        <end position="20"/>
    </location>
</feature>
<feature type="chain" id="PRO_0000407522" description="Vacuolar protein sorting/targeting protein 10">
    <location>
        <begin position="21"/>
        <end position="1484"/>
    </location>
</feature>
<feature type="topological domain" description="Lumenal" evidence="2">
    <location>
        <begin position="21"/>
        <end position="1374"/>
    </location>
</feature>
<feature type="transmembrane region" description="Helical" evidence="2">
    <location>
        <begin position="1375"/>
        <end position="1395"/>
    </location>
</feature>
<feature type="topological domain" description="Cytoplasmic" evidence="2">
    <location>
        <begin position="1396"/>
        <end position="1484"/>
    </location>
</feature>
<feature type="repeat" description="BNR 1">
    <location>
        <begin position="99"/>
        <end position="110"/>
    </location>
</feature>
<feature type="repeat" description="BNR 2">
    <location>
        <begin position="383"/>
        <end position="392"/>
    </location>
</feature>
<feature type="repeat" description="BNR 3">
    <location>
        <begin position="451"/>
        <end position="461"/>
    </location>
</feature>
<feature type="repeat" description="BNR 4">
    <location>
        <begin position="497"/>
        <end position="508"/>
    </location>
</feature>
<feature type="repeat" description="BNR 5">
    <location>
        <begin position="749"/>
        <end position="758"/>
    </location>
</feature>
<feature type="repeat" description="BNR 6">
    <location>
        <begin position="842"/>
        <end position="852"/>
    </location>
</feature>
<feature type="repeat" description="BNR 7">
    <location>
        <begin position="1116"/>
        <end position="1126"/>
    </location>
</feature>
<feature type="repeat" description="BNR 8">
    <location>
        <begin position="1157"/>
        <end position="1167"/>
    </location>
</feature>
<feature type="glycosylation site" description="N-linked (GlcNAc...) asparagine" evidence="2">
    <location>
        <position position="232"/>
    </location>
</feature>
<feature type="glycosylation site" description="N-linked (GlcNAc...) asparagine" evidence="2">
    <location>
        <position position="986"/>
    </location>
</feature>
<comment type="function">
    <text evidence="1">Functions as a sorting receptor in the Golgi compartment required for the intracellular sorting and delivery of soluble vacuolar proteins, like carboxypeptidase Y (CPY) and proteinase A. Executes multiple rounds of sorting by cycling between the late Golgi and a prevacuolar endosome-like compartment (By similarity).</text>
</comment>
<comment type="subcellular location">
    <subcellularLocation>
        <location evidence="1">Golgi apparatus</location>
        <location evidence="1">trans-Golgi network membrane</location>
        <topology evidence="1">Single-pass type I membrane protein</topology>
    </subcellularLocation>
    <subcellularLocation>
        <location evidence="1">Prevacuolar compartment membrane</location>
        <topology evidence="1">Single-pass type I membrane protein</topology>
    </subcellularLocation>
    <text evidence="1">Cycles between the Golgi apparatus and the prevacuolar compartment.</text>
</comment>
<comment type="similarity">
    <text evidence="3">Belongs to the VPS10-related sortilin family.</text>
</comment>
<sequence>MKWLYNPIVLLAYLFVLSGAAYTPEVRLSTHDVLPSAMQYFDDSPTILSLKNDRLWISQDDGKLFEEVGATKDQHVVSFQIDPFLKDRAFVMTNTKTHFYTENQGKSWKKFDAPIYELKENGMASVPSIEFNAADSNLLIISNYQCPDSGKYSHRCEHKYHYTTDGFRSVSKELPIKAHVCRFARSNPKSQIAKVSSIYCAVNELNSYKHIVQSTLIRSDNFGKDQNVVDLNESGSGAIIDIKVEESFLTVVQKLDKFSENSKIDMYVSRDGESFFKADLQVDIKYGVMSFLDSSPSSFFVQTTDYSSKMSDVAKLFRSDSSGVHYKLLLDNIAEGIVMKVENIDGAWLANTAVDKESDSDDLNSFLDFLLGGGFAKDIVTKFSFDDGDTWQLLKLNNEKCKLADGCSVHLWSFSEYSGKGKFVTGPTPGILMGIGSEGKHLGKYEEMNTYVSRDGGASWDLAIDTPCVFSFGDQGNIIMAVPYHGVKQESPANYFYFSLDQGLSWEKVELEKGIFVLDILTTLDGTSRKFLIEGVKPEEGKQGYTRAKEVQYFVDFANVHDGKVCSDSDFEEWTARKIDEDSSPTCVYGHREKFRRRKADAKCSVDRLFEDIKVIDDPCECTEADFECSIGFMPSEKGDGQKCVPDPTAIKALCGSSKSSVLEIYDKTLVQEDKCNMGGRKVDDFATMEKFKCSEYNKPGDDNSGEVSKIVVKLNEIEGRLSQYAYVGTDDDKLADNVVLKTSEDRAYISNDGGISFVKVPVHDRILGFFTGPVSGQVVLLTDSEYMYVSQDGGALFERRKIPAELSSQISRPIAFHKTDADKFIWIGSDCSKGNCEPVAYYTTNGGQSFKELMTGAITCDYVGSVFEQPEENLVYCTKVEDNNLRSLWSINGQKNPEKLFDNIVGYAVTGHYVVVAVVQDKSLEAKVTVDGKTFADADFPNDLKVEAHQAYTVLDSTSGSIFMHVTTSSKRDFEYGTLLKSNSNGTYFVTSLPNVNRNDVGFVDFDKIEGLEGLIIANIVANYKEDKAPKKLQTQVSRNDGSEWGYFIPPPTDSKGVKYKCNGSPLSKCALHLHGFTERADYRDTYSSGSATGFLIGVGNVGEYLTDYNEAATFLSIDGGVTWKEVQEGVYHWEFGDQGTILALVSANDDTDSIIYSLDEGKTWSEYKFSDKKVKVLDLATVPTDTSRKFLIFAVDPKDSRETLSFSIDFTNIYARQCQLDLDHPDLDDYEYWSPIHPEGQDKCLFGHEAKYLRRLSNKNDCFIGSAPLSEAYKQIRVCPCTRRDYECDYNYVRDPLDNTCKLVPGMSAGDRKKSMCEKPDAFQYFDSTGYRKIPLSTCVGGKQFDKWEPKACPGKQKEFNEYYGRDVKGGKLFILLFVPIVVFVFATWFVYDRGIKRNGGFQRLGQIRLDEEDFSDGFHPIEDNKIDVVVNRIVKGGVVVAAGVVATLKTVRKIDSLLLNKIEMLCLGETRERNYVNIPER</sequence>
<dbReference type="EMBL" id="CH981527">
    <property type="protein sequence ID" value="EDK45349.1"/>
    <property type="molecule type" value="Genomic_DNA"/>
</dbReference>
<dbReference type="RefSeq" id="XP_001525600.1">
    <property type="nucleotide sequence ID" value="XM_001525550.1"/>
</dbReference>
<dbReference type="SMR" id="A5E1P1"/>
<dbReference type="FunCoup" id="A5E1P1">
    <property type="interactions" value="186"/>
</dbReference>
<dbReference type="STRING" id="379508.A5E1P1"/>
<dbReference type="GlyCosmos" id="A5E1P1">
    <property type="glycosylation" value="2 sites, No reported glycans"/>
</dbReference>
<dbReference type="GeneID" id="5232664"/>
<dbReference type="KEGG" id="lel:PVL30_003018"/>
<dbReference type="VEuPathDB" id="FungiDB:LELG_03528"/>
<dbReference type="eggNOG" id="KOG3511">
    <property type="taxonomic scope" value="Eukaryota"/>
</dbReference>
<dbReference type="HOGENOM" id="CLU_000700_0_1_1"/>
<dbReference type="InParanoid" id="A5E1P1"/>
<dbReference type="OMA" id="ECDYNYY"/>
<dbReference type="OrthoDB" id="443634at2759"/>
<dbReference type="Proteomes" id="UP000001996">
    <property type="component" value="Unassembled WGS sequence"/>
</dbReference>
<dbReference type="GO" id="GO:0005829">
    <property type="term" value="C:cytosol"/>
    <property type="evidence" value="ECO:0007669"/>
    <property type="project" value="GOC"/>
</dbReference>
<dbReference type="GO" id="GO:0005794">
    <property type="term" value="C:Golgi apparatus"/>
    <property type="evidence" value="ECO:0007669"/>
    <property type="project" value="UniProtKB-SubCell"/>
</dbReference>
<dbReference type="GO" id="GO:0016020">
    <property type="term" value="C:membrane"/>
    <property type="evidence" value="ECO:0007669"/>
    <property type="project" value="UniProtKB-KW"/>
</dbReference>
<dbReference type="GO" id="GO:0006895">
    <property type="term" value="P:Golgi to endosome transport"/>
    <property type="evidence" value="ECO:0007669"/>
    <property type="project" value="TreeGrafter"/>
</dbReference>
<dbReference type="GO" id="GO:0006896">
    <property type="term" value="P:Golgi to vacuole transport"/>
    <property type="evidence" value="ECO:0007669"/>
    <property type="project" value="TreeGrafter"/>
</dbReference>
<dbReference type="GO" id="GO:0006623">
    <property type="term" value="P:protein targeting to vacuole"/>
    <property type="evidence" value="ECO:0007669"/>
    <property type="project" value="TreeGrafter"/>
</dbReference>
<dbReference type="CDD" id="cd15482">
    <property type="entry name" value="Sialidase_non-viral"/>
    <property type="match status" value="1"/>
</dbReference>
<dbReference type="FunFam" id="3.30.60.270:FF:000005">
    <property type="entry name" value="Sortilin"/>
    <property type="match status" value="1"/>
</dbReference>
<dbReference type="Gene3D" id="2.10.70.80">
    <property type="match status" value="2"/>
</dbReference>
<dbReference type="Gene3D" id="3.30.60.270">
    <property type="match status" value="2"/>
</dbReference>
<dbReference type="Gene3D" id="2.130.10.10">
    <property type="entry name" value="YVTN repeat-like/Quinoprotein amine dehydrogenase"/>
    <property type="match status" value="1"/>
</dbReference>
<dbReference type="InterPro" id="IPR031777">
    <property type="entry name" value="Sortilin_C"/>
</dbReference>
<dbReference type="InterPro" id="IPR031778">
    <property type="entry name" value="Sortilin_N"/>
</dbReference>
<dbReference type="InterPro" id="IPR006581">
    <property type="entry name" value="VPS10"/>
</dbReference>
<dbReference type="InterPro" id="IPR050310">
    <property type="entry name" value="VPS10-sortilin"/>
</dbReference>
<dbReference type="InterPro" id="IPR015943">
    <property type="entry name" value="WD40/YVTN_repeat-like_dom_sf"/>
</dbReference>
<dbReference type="PANTHER" id="PTHR12106">
    <property type="entry name" value="SORTILIN RELATED"/>
    <property type="match status" value="1"/>
</dbReference>
<dbReference type="PANTHER" id="PTHR12106:SF27">
    <property type="entry name" value="SORTILIN-RELATED RECEPTOR"/>
    <property type="match status" value="1"/>
</dbReference>
<dbReference type="Pfam" id="PF15902">
    <property type="entry name" value="Sortilin-Vps10"/>
    <property type="match status" value="2"/>
</dbReference>
<dbReference type="Pfam" id="PF15901">
    <property type="entry name" value="Sortilin_C"/>
    <property type="match status" value="2"/>
</dbReference>
<dbReference type="SMART" id="SM00602">
    <property type="entry name" value="VPS10"/>
    <property type="match status" value="2"/>
</dbReference>
<dbReference type="SUPFAM" id="SSF110296">
    <property type="entry name" value="Oligoxyloglucan reducing end-specific cellobiohydrolase"/>
    <property type="match status" value="2"/>
</dbReference>
<evidence type="ECO:0000250" key="1"/>
<evidence type="ECO:0000255" key="2"/>
<evidence type="ECO:0000305" key="3"/>
<gene>
    <name type="primary">VPS10</name>
    <name type="ORF">LELG_03528</name>
</gene>
<proteinExistence type="inferred from homology"/>